<name>EIF3H_DROWI</name>
<organism>
    <name type="scientific">Drosophila willistoni</name>
    <name type="common">Fruit fly</name>
    <dbReference type="NCBI Taxonomy" id="7260"/>
    <lineage>
        <taxon>Eukaryota</taxon>
        <taxon>Metazoa</taxon>
        <taxon>Ecdysozoa</taxon>
        <taxon>Arthropoda</taxon>
        <taxon>Hexapoda</taxon>
        <taxon>Insecta</taxon>
        <taxon>Pterygota</taxon>
        <taxon>Neoptera</taxon>
        <taxon>Endopterygota</taxon>
        <taxon>Diptera</taxon>
        <taxon>Brachycera</taxon>
        <taxon>Muscomorpha</taxon>
        <taxon>Ephydroidea</taxon>
        <taxon>Drosophilidae</taxon>
        <taxon>Drosophila</taxon>
        <taxon>Sophophora</taxon>
    </lineage>
</organism>
<reference key="1">
    <citation type="journal article" date="2007" name="Nature">
        <title>Evolution of genes and genomes on the Drosophila phylogeny.</title>
        <authorList>
            <consortium name="Drosophila 12 genomes consortium"/>
        </authorList>
    </citation>
    <scope>NUCLEOTIDE SEQUENCE [LARGE SCALE GENOMIC DNA]</scope>
    <source>
        <strain>Tucson 14030-0811.24</strain>
    </source>
</reference>
<comment type="function">
    <text evidence="2">Component of the eukaryotic translation initiation factor 3 (eIF-3) complex, which is involved in protein synthesis of a specialized repertoire of mRNAs and, together with other initiation factors, stimulates binding of mRNA and methionyl-tRNAi to the 40S ribosome. The eIF-3 complex specifically targets and initiates translation of a subset of mRNAs involved in cell proliferation.</text>
</comment>
<comment type="subunit">
    <text evidence="1 2">Component of the eukaryotic translation initiation factor 3 (eIF-3) complex. The eIF-3 complex interacts with pix. Interacts with mxt (By similarity).</text>
</comment>
<comment type="subcellular location">
    <subcellularLocation>
        <location evidence="2">Cytoplasm</location>
    </subcellularLocation>
</comment>
<comment type="similarity">
    <text evidence="2">Belongs to the eIF-3 subunit H family.</text>
</comment>
<protein>
    <recommendedName>
        <fullName evidence="2">Eukaryotic translation initiation factor 3 subunit H</fullName>
        <shortName evidence="2">eIF3h</shortName>
    </recommendedName>
    <alternativeName>
        <fullName evidence="2">Eukaryotic translation initiation factor 3 subunit 3</fullName>
    </alternativeName>
</protein>
<sequence length="337" mass="38252">MANRGGRHARTEETENAINYVQCDGLAVMKMVKHCHEESNNMDLAQGALLGLVVDKCLEITNCFPFPKSGDETMDEEMYQLTVMRRLRRVNVDHLHVGWYQSSDVGNSLSLALLESQYHYQTSIEESVVVVYDTQKSSRGFLCLKAYRLTPQAIQMYKDGDFTPEAFRNLKVGYESLFAEIPIVIKNSPLTNIMMSELNELLPEDKGHNFLDLGTASVLENHMRSLIERVDELYQEAVRYNKYQQVVFKQDTEKHRALAKLAAENAVRTSKGEPTVSEEEVIKQFRPMPVPARLTATITSGQINTHAQHIAQFCSQSLAKLFITESLQNAKEAKEIK</sequence>
<gene>
    <name evidence="2" type="primary">eIF-3p40</name>
    <name evidence="2" type="synonym">eif3-S3</name>
    <name type="ORF">GK24148</name>
</gene>
<evidence type="ECO:0000250" key="1">
    <source>
        <dbReference type="UniProtKB" id="Q9U9Q4"/>
    </source>
</evidence>
<evidence type="ECO:0000255" key="2">
    <source>
        <dbReference type="HAMAP-Rule" id="MF_03007"/>
    </source>
</evidence>
<evidence type="ECO:0000255" key="3">
    <source>
        <dbReference type="PROSITE-ProRule" id="PRU01182"/>
    </source>
</evidence>
<accession>B4N116</accession>
<keyword id="KW-0963">Cytoplasm</keyword>
<keyword id="KW-0396">Initiation factor</keyword>
<keyword id="KW-0648">Protein biosynthesis</keyword>
<keyword id="KW-1185">Reference proteome</keyword>
<proteinExistence type="inferred from homology"/>
<dbReference type="EMBL" id="CH963920">
    <property type="protein sequence ID" value="EDW78178.1"/>
    <property type="molecule type" value="Genomic_DNA"/>
</dbReference>
<dbReference type="SMR" id="B4N116"/>
<dbReference type="STRING" id="7260.B4N116"/>
<dbReference type="MEROPS" id="M67.971"/>
<dbReference type="EnsemblMetazoa" id="FBtr0254799">
    <property type="protein sequence ID" value="FBpp0253291"/>
    <property type="gene ID" value="FBgn0226110"/>
</dbReference>
<dbReference type="EnsemblMetazoa" id="XM_002067156.4">
    <property type="protein sequence ID" value="XP_002067192.1"/>
    <property type="gene ID" value="LOC6644216"/>
</dbReference>
<dbReference type="GeneID" id="6644216"/>
<dbReference type="KEGG" id="dwi:6644216"/>
<dbReference type="CTD" id="8667"/>
<dbReference type="eggNOG" id="KOG1560">
    <property type="taxonomic scope" value="Eukaryota"/>
</dbReference>
<dbReference type="HOGENOM" id="CLU_044094_0_0_1"/>
<dbReference type="OMA" id="WYQSTYF"/>
<dbReference type="OrthoDB" id="10265695at2759"/>
<dbReference type="PhylomeDB" id="B4N116"/>
<dbReference type="ChiTaRS" id="eIF-3p40">
    <property type="organism name" value="fly"/>
</dbReference>
<dbReference type="Proteomes" id="UP000007798">
    <property type="component" value="Unassembled WGS sequence"/>
</dbReference>
<dbReference type="GO" id="GO:0016282">
    <property type="term" value="C:eukaryotic 43S preinitiation complex"/>
    <property type="evidence" value="ECO:0007669"/>
    <property type="project" value="UniProtKB-UniRule"/>
</dbReference>
<dbReference type="GO" id="GO:0033290">
    <property type="term" value="C:eukaryotic 48S preinitiation complex"/>
    <property type="evidence" value="ECO:0007669"/>
    <property type="project" value="UniProtKB-UniRule"/>
</dbReference>
<dbReference type="GO" id="GO:0005852">
    <property type="term" value="C:eukaryotic translation initiation factor 3 complex"/>
    <property type="evidence" value="ECO:0007669"/>
    <property type="project" value="UniProtKB-UniRule"/>
</dbReference>
<dbReference type="GO" id="GO:0008237">
    <property type="term" value="F:metallopeptidase activity"/>
    <property type="evidence" value="ECO:0007669"/>
    <property type="project" value="InterPro"/>
</dbReference>
<dbReference type="GO" id="GO:0003743">
    <property type="term" value="F:translation initiation factor activity"/>
    <property type="evidence" value="ECO:0007669"/>
    <property type="project" value="UniProtKB-UniRule"/>
</dbReference>
<dbReference type="GO" id="GO:0001732">
    <property type="term" value="P:formation of cytoplasmic translation initiation complex"/>
    <property type="evidence" value="ECO:0007669"/>
    <property type="project" value="UniProtKB-UniRule"/>
</dbReference>
<dbReference type="GO" id="GO:0045747">
    <property type="term" value="P:positive regulation of Notch signaling pathway"/>
    <property type="evidence" value="ECO:0007669"/>
    <property type="project" value="EnsemblMetazoa"/>
</dbReference>
<dbReference type="CDD" id="cd08065">
    <property type="entry name" value="MPN_eIF3h"/>
    <property type="match status" value="1"/>
</dbReference>
<dbReference type="FunFam" id="3.40.140.10:FF:000045">
    <property type="entry name" value="Eukaryotic translation initiation factor 3 subunit H"/>
    <property type="match status" value="1"/>
</dbReference>
<dbReference type="Gene3D" id="3.40.140.10">
    <property type="entry name" value="Cytidine Deaminase, domain 2"/>
    <property type="match status" value="1"/>
</dbReference>
<dbReference type="HAMAP" id="MF_03007">
    <property type="entry name" value="eIF3h"/>
    <property type="match status" value="1"/>
</dbReference>
<dbReference type="InterPro" id="IPR027524">
    <property type="entry name" value="eIF3h"/>
</dbReference>
<dbReference type="InterPro" id="IPR045810">
    <property type="entry name" value="eIF3h_C"/>
</dbReference>
<dbReference type="InterPro" id="IPR000555">
    <property type="entry name" value="JAMM/MPN+_dom"/>
</dbReference>
<dbReference type="InterPro" id="IPR050242">
    <property type="entry name" value="JAMM_MPN+_peptidase_M67A"/>
</dbReference>
<dbReference type="InterPro" id="IPR037518">
    <property type="entry name" value="MPN"/>
</dbReference>
<dbReference type="PANTHER" id="PTHR10410">
    <property type="entry name" value="EUKARYOTIC TRANSLATION INITIATION FACTOR 3 -RELATED"/>
    <property type="match status" value="1"/>
</dbReference>
<dbReference type="Pfam" id="PF19445">
    <property type="entry name" value="eIF3h_C"/>
    <property type="match status" value="1"/>
</dbReference>
<dbReference type="Pfam" id="PF01398">
    <property type="entry name" value="JAB"/>
    <property type="match status" value="1"/>
</dbReference>
<dbReference type="SMART" id="SM00232">
    <property type="entry name" value="JAB_MPN"/>
    <property type="match status" value="1"/>
</dbReference>
<dbReference type="PROSITE" id="PS50249">
    <property type="entry name" value="MPN"/>
    <property type="match status" value="1"/>
</dbReference>
<feature type="chain" id="PRO_0000365193" description="Eukaryotic translation initiation factor 3 subunit H">
    <location>
        <begin position="1"/>
        <end position="337"/>
    </location>
</feature>
<feature type="domain" description="MPN" evidence="3">
    <location>
        <begin position="21"/>
        <end position="153"/>
    </location>
</feature>